<accession>P0DSU4</accession>
<accession>P33858</accession>
<evidence type="ECO:0000305" key="1"/>
<protein>
    <recommendedName>
        <fullName>Protein OPG181</fullName>
    </recommendedName>
</protein>
<dbReference type="EMBL" id="L22579">
    <property type="protein sequence ID" value="AAA60906.1"/>
    <property type="molecule type" value="Genomic_DNA"/>
</dbReference>
<dbReference type="PIR" id="T28596">
    <property type="entry name" value="T28596"/>
</dbReference>
<dbReference type="RefSeq" id="NP_042207.1">
    <property type="nucleotide sequence ID" value="NC_001611.1"/>
</dbReference>
<dbReference type="GeneID" id="1486451"/>
<dbReference type="KEGG" id="vg:1486451"/>
<dbReference type="Proteomes" id="UP000119805">
    <property type="component" value="Segment"/>
</dbReference>
<dbReference type="InterPro" id="IPR007032">
    <property type="entry name" value="Poxvirus_A51"/>
</dbReference>
<dbReference type="Pfam" id="PF04948">
    <property type="entry name" value="Pox_A51"/>
    <property type="match status" value="1"/>
</dbReference>
<reference key="1">
    <citation type="journal article" date="1992" name="J. Gen. Virol.">
        <title>Nucleotide sequence of 21.8 kbp of variola major virus strain Harvey and comparison with vaccinia virus.</title>
        <authorList>
            <person name="Aguado B."/>
            <person name="Selmes I.P."/>
            <person name="Smith G.L."/>
        </authorList>
    </citation>
    <scope>NUCLEOTIDE SEQUENCE [GENOMIC DNA]</scope>
    <source>
        <strain>Harvey</strain>
    </source>
</reference>
<reference key="2">
    <citation type="journal article" date="1993" name="Nature">
        <title>Potential virulence determinants in terminal regions of variola smallpox virus genome.</title>
        <authorList>
            <person name="Massung R.F."/>
            <person name="Esposito J.J."/>
            <person name="Liu L.I."/>
            <person name="Qi J."/>
            <person name="Utterback T.R."/>
            <person name="Knight J.C."/>
            <person name="Aubin L."/>
            <person name="Yuran T.E."/>
            <person name="Parsons J.M."/>
            <person name="Loparev V.N."/>
            <person name="Selivanov N.A."/>
            <person name="Cavallaro K.F."/>
            <person name="Kerlavage A.R."/>
            <person name="Mahy B.W.J."/>
            <person name="Venter J.C."/>
        </authorList>
    </citation>
    <scope>NUCLEOTIDE SEQUENCE [GENOMIC DNA]</scope>
    <source>
        <strain>Bangladesh-1975</strain>
    </source>
</reference>
<keyword id="KW-0244">Early protein</keyword>
<sequence>MDGVIVYCLNALVKHGEEINHIKNDFMIKPCCERVCEKVKNVHIDGQSKNNTVIADLPYLDNAVLDVCKSVYKKNVSRISRFANLIKIDDDDKTPTGVYNYFKPKDAISVIISIGKDKDVCELLIASDKACACIELNSYKVAILPMNVSFFTKGNASLIILLFDFSINAAPLLRSVTDNNVVISRHKRLHGEIPSSNWFKFYISIKSNYCSILYMVVDGSVMYAIADNKTHTIISKNILDNTTINDECRCCYFEPQIKILDRDEMLNGSSCDMNRHCIMMNLPDIGEFGSSILGKYEPDMIKIALSVAGNLIRNQDYIPGRRGYSYYVYGIASR</sequence>
<name>PG181_VARV</name>
<comment type="induction">
    <text>Expressed in the early phase of the viral replicative cycle.</text>
</comment>
<comment type="similarity">
    <text evidence="1">Belongs to the orthopoxvirus OPG181 family.</text>
</comment>
<gene>
    <name type="primary">OPG181</name>
    <name type="ORF">A51R</name>
    <name type="ORF">J5R</name>
</gene>
<organism>
    <name type="scientific">Variola virus</name>
    <dbReference type="NCBI Taxonomy" id="10255"/>
    <lineage>
        <taxon>Viruses</taxon>
        <taxon>Varidnaviria</taxon>
        <taxon>Bamfordvirae</taxon>
        <taxon>Nucleocytoviricota</taxon>
        <taxon>Pokkesviricetes</taxon>
        <taxon>Chitovirales</taxon>
        <taxon>Poxviridae</taxon>
        <taxon>Chordopoxvirinae</taxon>
        <taxon>Orthopoxvirus</taxon>
    </lineage>
</organism>
<feature type="chain" id="PRO_0000448169" description="Protein OPG181">
    <location>
        <begin position="1"/>
        <end position="334"/>
    </location>
</feature>
<organismHost>
    <name type="scientific">Homo sapiens</name>
    <name type="common">Human</name>
    <dbReference type="NCBI Taxonomy" id="9606"/>
</organismHost>
<proteinExistence type="evidence at transcript level"/>